<proteinExistence type="inferred from homology"/>
<sequence length="286" mass="30928">MKIRVPATSANLGPGFDSMGIAVSKYLEVDILEESEQWFIEHDLGDIPNDDSNLLIQTALRLAPNIPAHRLKMTSDIPLARGLGSSSSVIVAGIELANQLGHLNLTADRKLAIATRIEGHPDNVAPAIFGQLVIASQIGKDVDYIIAPFPDLSLVCFIPDYELKTSDSRDVLPKQLSYKQAVAASSVANLAIAALLTGNLKKAGRAIENDQFHEIYRQRLVREFQPIKRAAAANGAYATYLSGAGPAIMVMCPNEKKMAIYEAIEQLGLIGQLVSLELDRQGLCLV</sequence>
<dbReference type="EC" id="2.7.1.39" evidence="1"/>
<dbReference type="EMBL" id="FM204884">
    <property type="protein sequence ID" value="CAW99136.1"/>
    <property type="molecule type" value="Genomic_DNA"/>
</dbReference>
<dbReference type="SMR" id="C0MEX3"/>
<dbReference type="KEGG" id="seq:SZO_09000"/>
<dbReference type="eggNOG" id="COG0083">
    <property type="taxonomic scope" value="Bacteria"/>
</dbReference>
<dbReference type="HOGENOM" id="CLU_041243_0_0_9"/>
<dbReference type="UniPathway" id="UPA00050">
    <property type="reaction ID" value="UER00064"/>
</dbReference>
<dbReference type="Proteomes" id="UP000001368">
    <property type="component" value="Chromosome"/>
</dbReference>
<dbReference type="GO" id="GO:0005737">
    <property type="term" value="C:cytoplasm"/>
    <property type="evidence" value="ECO:0007669"/>
    <property type="project" value="UniProtKB-SubCell"/>
</dbReference>
<dbReference type="GO" id="GO:0005524">
    <property type="term" value="F:ATP binding"/>
    <property type="evidence" value="ECO:0007669"/>
    <property type="project" value="UniProtKB-UniRule"/>
</dbReference>
<dbReference type="GO" id="GO:0004413">
    <property type="term" value="F:homoserine kinase activity"/>
    <property type="evidence" value="ECO:0007669"/>
    <property type="project" value="UniProtKB-UniRule"/>
</dbReference>
<dbReference type="GO" id="GO:0009088">
    <property type="term" value="P:threonine biosynthetic process"/>
    <property type="evidence" value="ECO:0007669"/>
    <property type="project" value="UniProtKB-UniRule"/>
</dbReference>
<dbReference type="Gene3D" id="3.30.230.10">
    <property type="match status" value="1"/>
</dbReference>
<dbReference type="Gene3D" id="3.30.70.890">
    <property type="entry name" value="GHMP kinase, C-terminal domain"/>
    <property type="match status" value="1"/>
</dbReference>
<dbReference type="HAMAP" id="MF_00384">
    <property type="entry name" value="Homoser_kinase"/>
    <property type="match status" value="1"/>
</dbReference>
<dbReference type="InterPro" id="IPR013750">
    <property type="entry name" value="GHMP_kinase_C_dom"/>
</dbReference>
<dbReference type="InterPro" id="IPR036554">
    <property type="entry name" value="GHMP_kinase_C_sf"/>
</dbReference>
<dbReference type="InterPro" id="IPR006204">
    <property type="entry name" value="GHMP_kinase_N_dom"/>
</dbReference>
<dbReference type="InterPro" id="IPR006203">
    <property type="entry name" value="GHMP_knse_ATP-bd_CS"/>
</dbReference>
<dbReference type="InterPro" id="IPR000870">
    <property type="entry name" value="Homoserine_kinase"/>
</dbReference>
<dbReference type="InterPro" id="IPR020568">
    <property type="entry name" value="Ribosomal_Su5_D2-typ_SF"/>
</dbReference>
<dbReference type="InterPro" id="IPR014721">
    <property type="entry name" value="Ribsml_uS5_D2-typ_fold_subgr"/>
</dbReference>
<dbReference type="NCBIfam" id="TIGR00191">
    <property type="entry name" value="thrB"/>
    <property type="match status" value="1"/>
</dbReference>
<dbReference type="PANTHER" id="PTHR20861:SF1">
    <property type="entry name" value="HOMOSERINE KINASE"/>
    <property type="match status" value="1"/>
</dbReference>
<dbReference type="PANTHER" id="PTHR20861">
    <property type="entry name" value="HOMOSERINE/4-DIPHOSPHOCYTIDYL-2-C-METHYL-D-ERYTHRITOL KINASE"/>
    <property type="match status" value="1"/>
</dbReference>
<dbReference type="Pfam" id="PF08544">
    <property type="entry name" value="GHMP_kinases_C"/>
    <property type="match status" value="1"/>
</dbReference>
<dbReference type="Pfam" id="PF00288">
    <property type="entry name" value="GHMP_kinases_N"/>
    <property type="match status" value="1"/>
</dbReference>
<dbReference type="PIRSF" id="PIRSF000676">
    <property type="entry name" value="Homoser_kin"/>
    <property type="match status" value="1"/>
</dbReference>
<dbReference type="PRINTS" id="PR00958">
    <property type="entry name" value="HOMSERKINASE"/>
</dbReference>
<dbReference type="SUPFAM" id="SSF55060">
    <property type="entry name" value="GHMP Kinase, C-terminal domain"/>
    <property type="match status" value="1"/>
</dbReference>
<dbReference type="SUPFAM" id="SSF54211">
    <property type="entry name" value="Ribosomal protein S5 domain 2-like"/>
    <property type="match status" value="1"/>
</dbReference>
<dbReference type="PROSITE" id="PS00627">
    <property type="entry name" value="GHMP_KINASES_ATP"/>
    <property type="match status" value="1"/>
</dbReference>
<organism>
    <name type="scientific">Streptococcus equi subsp. zooepidemicus (strain H70)</name>
    <dbReference type="NCBI Taxonomy" id="553483"/>
    <lineage>
        <taxon>Bacteria</taxon>
        <taxon>Bacillati</taxon>
        <taxon>Bacillota</taxon>
        <taxon>Bacilli</taxon>
        <taxon>Lactobacillales</taxon>
        <taxon>Streptococcaceae</taxon>
        <taxon>Streptococcus</taxon>
    </lineage>
</organism>
<reference key="1">
    <citation type="journal article" date="2009" name="PLoS Pathog.">
        <title>Genomic evidence for the evolution of Streptococcus equi: host restriction, increased virulence, and genetic exchange with human pathogens.</title>
        <authorList>
            <person name="Holden M.T.G."/>
            <person name="Heather Z."/>
            <person name="Paillot R."/>
            <person name="Steward K.F."/>
            <person name="Webb K."/>
            <person name="Ainslie F."/>
            <person name="Jourdan T."/>
            <person name="Bason N.C."/>
            <person name="Holroyd N.E."/>
            <person name="Mungall K."/>
            <person name="Quail M.A."/>
            <person name="Sanders M."/>
            <person name="Simmonds M."/>
            <person name="Willey D."/>
            <person name="Brooks K."/>
            <person name="Aanensen D.M."/>
            <person name="Spratt B.G."/>
            <person name="Jolley K.A."/>
            <person name="Maiden M.C.J."/>
            <person name="Kehoe M."/>
            <person name="Chanter N."/>
            <person name="Bentley S.D."/>
            <person name="Robinson C."/>
            <person name="Maskell D.J."/>
            <person name="Parkhill J."/>
            <person name="Waller A.S."/>
        </authorList>
    </citation>
    <scope>NUCLEOTIDE SEQUENCE [LARGE SCALE GENOMIC DNA]</scope>
    <source>
        <strain>H70</strain>
    </source>
</reference>
<accession>C0MEX3</accession>
<evidence type="ECO:0000255" key="1">
    <source>
        <dbReference type="HAMAP-Rule" id="MF_00384"/>
    </source>
</evidence>
<feature type="chain" id="PRO_1000205740" description="Homoserine kinase">
    <location>
        <begin position="1"/>
        <end position="286"/>
    </location>
</feature>
<feature type="binding site" evidence="1">
    <location>
        <begin position="78"/>
        <end position="88"/>
    </location>
    <ligand>
        <name>ATP</name>
        <dbReference type="ChEBI" id="CHEBI:30616"/>
    </ligand>
</feature>
<comment type="function">
    <text evidence="1">Catalyzes the ATP-dependent phosphorylation of L-homoserine to L-homoserine phosphate.</text>
</comment>
<comment type="catalytic activity">
    <reaction evidence="1">
        <text>L-homoserine + ATP = O-phospho-L-homoserine + ADP + H(+)</text>
        <dbReference type="Rhea" id="RHEA:13985"/>
        <dbReference type="ChEBI" id="CHEBI:15378"/>
        <dbReference type="ChEBI" id="CHEBI:30616"/>
        <dbReference type="ChEBI" id="CHEBI:57476"/>
        <dbReference type="ChEBI" id="CHEBI:57590"/>
        <dbReference type="ChEBI" id="CHEBI:456216"/>
        <dbReference type="EC" id="2.7.1.39"/>
    </reaction>
</comment>
<comment type="pathway">
    <text evidence="1">Amino-acid biosynthesis; L-threonine biosynthesis; L-threonine from L-aspartate: step 4/5.</text>
</comment>
<comment type="subcellular location">
    <subcellularLocation>
        <location evidence="1">Cytoplasm</location>
    </subcellularLocation>
</comment>
<comment type="similarity">
    <text evidence="1">Belongs to the GHMP kinase family. Homoserine kinase subfamily.</text>
</comment>
<protein>
    <recommendedName>
        <fullName evidence="1">Homoserine kinase</fullName>
        <shortName evidence="1">HK</shortName>
        <shortName evidence="1">HSK</shortName>
        <ecNumber evidence="1">2.7.1.39</ecNumber>
    </recommendedName>
</protein>
<keyword id="KW-0028">Amino-acid biosynthesis</keyword>
<keyword id="KW-0067">ATP-binding</keyword>
<keyword id="KW-0963">Cytoplasm</keyword>
<keyword id="KW-0418">Kinase</keyword>
<keyword id="KW-0547">Nucleotide-binding</keyword>
<keyword id="KW-0791">Threonine biosynthesis</keyword>
<keyword id="KW-0808">Transferase</keyword>
<name>KHSE_STRS7</name>
<gene>
    <name evidence="1" type="primary">thrB</name>
    <name type="ordered locus">SZO_09000</name>
</gene>